<protein>
    <recommendedName>
        <fullName evidence="1">Aspartate--tRNA ligase</fullName>
        <ecNumber evidence="1">6.1.1.12</ecNumber>
    </recommendedName>
    <alternativeName>
        <fullName evidence="1">Aspartyl-tRNA synthetase</fullName>
        <shortName evidence="1">AspRS</shortName>
    </alternativeName>
</protein>
<feature type="chain" id="PRO_1000199015" description="Aspartate--tRNA ligase">
    <location>
        <begin position="1"/>
        <end position="587"/>
    </location>
</feature>
<feature type="region of interest" description="Aspartate" evidence="1">
    <location>
        <begin position="198"/>
        <end position="201"/>
    </location>
</feature>
<feature type="binding site" evidence="1">
    <location>
        <position position="174"/>
    </location>
    <ligand>
        <name>L-aspartate</name>
        <dbReference type="ChEBI" id="CHEBI:29991"/>
    </ligand>
</feature>
<feature type="binding site" evidence="1">
    <location>
        <begin position="220"/>
        <end position="222"/>
    </location>
    <ligand>
        <name>ATP</name>
        <dbReference type="ChEBI" id="CHEBI:30616"/>
    </ligand>
</feature>
<feature type="binding site" evidence="1">
    <location>
        <position position="220"/>
    </location>
    <ligand>
        <name>L-aspartate</name>
        <dbReference type="ChEBI" id="CHEBI:29991"/>
    </ligand>
</feature>
<feature type="binding site" evidence="1">
    <location>
        <position position="229"/>
    </location>
    <ligand>
        <name>ATP</name>
        <dbReference type="ChEBI" id="CHEBI:30616"/>
    </ligand>
</feature>
<feature type="binding site" evidence="1">
    <location>
        <position position="443"/>
    </location>
    <ligand>
        <name>L-aspartate</name>
        <dbReference type="ChEBI" id="CHEBI:29991"/>
    </ligand>
</feature>
<feature type="binding site" evidence="1">
    <location>
        <position position="477"/>
    </location>
    <ligand>
        <name>ATP</name>
        <dbReference type="ChEBI" id="CHEBI:30616"/>
    </ligand>
</feature>
<feature type="binding site" evidence="1">
    <location>
        <position position="484"/>
    </location>
    <ligand>
        <name>L-aspartate</name>
        <dbReference type="ChEBI" id="CHEBI:29991"/>
    </ligand>
</feature>
<feature type="binding site" evidence="1">
    <location>
        <begin position="529"/>
        <end position="532"/>
    </location>
    <ligand>
        <name>ATP</name>
        <dbReference type="ChEBI" id="CHEBI:30616"/>
    </ligand>
</feature>
<evidence type="ECO:0000255" key="1">
    <source>
        <dbReference type="HAMAP-Rule" id="MF_00044"/>
    </source>
</evidence>
<name>SYD_STRZJ</name>
<dbReference type="EC" id="6.1.1.12" evidence="1"/>
<dbReference type="EMBL" id="CP000919">
    <property type="protein sequence ID" value="ACO18040.1"/>
    <property type="molecule type" value="Genomic_DNA"/>
</dbReference>
<dbReference type="RefSeq" id="WP_000830880.1">
    <property type="nucleotide sequence ID" value="NC_012466.1"/>
</dbReference>
<dbReference type="SMR" id="C1CH44"/>
<dbReference type="KEGG" id="sjj:SPJ_2136"/>
<dbReference type="HOGENOM" id="CLU_014330_3_2_9"/>
<dbReference type="Proteomes" id="UP000002206">
    <property type="component" value="Chromosome"/>
</dbReference>
<dbReference type="GO" id="GO:0005737">
    <property type="term" value="C:cytoplasm"/>
    <property type="evidence" value="ECO:0007669"/>
    <property type="project" value="UniProtKB-SubCell"/>
</dbReference>
<dbReference type="GO" id="GO:0004815">
    <property type="term" value="F:aspartate-tRNA ligase activity"/>
    <property type="evidence" value="ECO:0007669"/>
    <property type="project" value="UniProtKB-UniRule"/>
</dbReference>
<dbReference type="GO" id="GO:0005524">
    <property type="term" value="F:ATP binding"/>
    <property type="evidence" value="ECO:0007669"/>
    <property type="project" value="UniProtKB-UniRule"/>
</dbReference>
<dbReference type="GO" id="GO:0140096">
    <property type="term" value="F:catalytic activity, acting on a protein"/>
    <property type="evidence" value="ECO:0007669"/>
    <property type="project" value="UniProtKB-ARBA"/>
</dbReference>
<dbReference type="GO" id="GO:0003676">
    <property type="term" value="F:nucleic acid binding"/>
    <property type="evidence" value="ECO:0007669"/>
    <property type="project" value="InterPro"/>
</dbReference>
<dbReference type="GO" id="GO:0016740">
    <property type="term" value="F:transferase activity"/>
    <property type="evidence" value="ECO:0007669"/>
    <property type="project" value="UniProtKB-ARBA"/>
</dbReference>
<dbReference type="GO" id="GO:0006422">
    <property type="term" value="P:aspartyl-tRNA aminoacylation"/>
    <property type="evidence" value="ECO:0007669"/>
    <property type="project" value="UniProtKB-UniRule"/>
</dbReference>
<dbReference type="CDD" id="cd00777">
    <property type="entry name" value="AspRS_core"/>
    <property type="match status" value="1"/>
</dbReference>
<dbReference type="CDD" id="cd04317">
    <property type="entry name" value="EcAspRS_like_N"/>
    <property type="match status" value="1"/>
</dbReference>
<dbReference type="Gene3D" id="3.30.930.10">
    <property type="entry name" value="Bira Bifunctional Protein, Domain 2"/>
    <property type="match status" value="1"/>
</dbReference>
<dbReference type="Gene3D" id="3.30.1360.30">
    <property type="entry name" value="GAD-like domain"/>
    <property type="match status" value="1"/>
</dbReference>
<dbReference type="Gene3D" id="2.40.50.140">
    <property type="entry name" value="Nucleic acid-binding proteins"/>
    <property type="match status" value="1"/>
</dbReference>
<dbReference type="HAMAP" id="MF_00044">
    <property type="entry name" value="Asp_tRNA_synth_type1"/>
    <property type="match status" value="1"/>
</dbReference>
<dbReference type="InterPro" id="IPR004364">
    <property type="entry name" value="Aa-tRNA-synt_II"/>
</dbReference>
<dbReference type="InterPro" id="IPR006195">
    <property type="entry name" value="aa-tRNA-synth_II"/>
</dbReference>
<dbReference type="InterPro" id="IPR045864">
    <property type="entry name" value="aa-tRNA-synth_II/BPL/LPL"/>
</dbReference>
<dbReference type="InterPro" id="IPR004524">
    <property type="entry name" value="Asp-tRNA-ligase_1"/>
</dbReference>
<dbReference type="InterPro" id="IPR047089">
    <property type="entry name" value="Asp-tRNA-ligase_1_N"/>
</dbReference>
<dbReference type="InterPro" id="IPR002312">
    <property type="entry name" value="Asp/Asn-tRNA-synth_IIb"/>
</dbReference>
<dbReference type="InterPro" id="IPR047090">
    <property type="entry name" value="AspRS_core"/>
</dbReference>
<dbReference type="InterPro" id="IPR004115">
    <property type="entry name" value="GAD-like_sf"/>
</dbReference>
<dbReference type="InterPro" id="IPR029351">
    <property type="entry name" value="GAD_dom"/>
</dbReference>
<dbReference type="InterPro" id="IPR012340">
    <property type="entry name" value="NA-bd_OB-fold"/>
</dbReference>
<dbReference type="InterPro" id="IPR004365">
    <property type="entry name" value="NA-bd_OB_tRNA"/>
</dbReference>
<dbReference type="NCBIfam" id="TIGR00459">
    <property type="entry name" value="aspS_bact"/>
    <property type="match status" value="1"/>
</dbReference>
<dbReference type="NCBIfam" id="NF001750">
    <property type="entry name" value="PRK00476.1"/>
    <property type="match status" value="1"/>
</dbReference>
<dbReference type="PANTHER" id="PTHR22594:SF5">
    <property type="entry name" value="ASPARTATE--TRNA LIGASE, MITOCHONDRIAL"/>
    <property type="match status" value="1"/>
</dbReference>
<dbReference type="PANTHER" id="PTHR22594">
    <property type="entry name" value="ASPARTYL/LYSYL-TRNA SYNTHETASE"/>
    <property type="match status" value="1"/>
</dbReference>
<dbReference type="Pfam" id="PF02938">
    <property type="entry name" value="GAD"/>
    <property type="match status" value="1"/>
</dbReference>
<dbReference type="Pfam" id="PF00152">
    <property type="entry name" value="tRNA-synt_2"/>
    <property type="match status" value="1"/>
</dbReference>
<dbReference type="Pfam" id="PF01336">
    <property type="entry name" value="tRNA_anti-codon"/>
    <property type="match status" value="1"/>
</dbReference>
<dbReference type="PRINTS" id="PR01042">
    <property type="entry name" value="TRNASYNTHASP"/>
</dbReference>
<dbReference type="SUPFAM" id="SSF55681">
    <property type="entry name" value="Class II aaRS and biotin synthetases"/>
    <property type="match status" value="1"/>
</dbReference>
<dbReference type="SUPFAM" id="SSF55261">
    <property type="entry name" value="GAD domain-like"/>
    <property type="match status" value="1"/>
</dbReference>
<dbReference type="SUPFAM" id="SSF50249">
    <property type="entry name" value="Nucleic acid-binding proteins"/>
    <property type="match status" value="1"/>
</dbReference>
<dbReference type="PROSITE" id="PS50862">
    <property type="entry name" value="AA_TRNA_LIGASE_II"/>
    <property type="match status" value="1"/>
</dbReference>
<accession>C1CH44</accession>
<organism>
    <name type="scientific">Streptococcus pneumoniae (strain JJA)</name>
    <dbReference type="NCBI Taxonomy" id="488222"/>
    <lineage>
        <taxon>Bacteria</taxon>
        <taxon>Bacillati</taxon>
        <taxon>Bacillota</taxon>
        <taxon>Bacilli</taxon>
        <taxon>Lactobacillales</taxon>
        <taxon>Streptococcaceae</taxon>
        <taxon>Streptococcus</taxon>
    </lineage>
</organism>
<proteinExistence type="inferred from homology"/>
<reference key="1">
    <citation type="journal article" date="2010" name="Genome Biol.">
        <title>Structure and dynamics of the pan-genome of Streptococcus pneumoniae and closely related species.</title>
        <authorList>
            <person name="Donati C."/>
            <person name="Hiller N.L."/>
            <person name="Tettelin H."/>
            <person name="Muzzi A."/>
            <person name="Croucher N.J."/>
            <person name="Angiuoli S.V."/>
            <person name="Oggioni M."/>
            <person name="Dunning Hotopp J.C."/>
            <person name="Hu F.Z."/>
            <person name="Riley D.R."/>
            <person name="Covacci A."/>
            <person name="Mitchell T.J."/>
            <person name="Bentley S.D."/>
            <person name="Kilian M."/>
            <person name="Ehrlich G.D."/>
            <person name="Rappuoli R."/>
            <person name="Moxon E.R."/>
            <person name="Masignani V."/>
        </authorList>
    </citation>
    <scope>NUCLEOTIDE SEQUENCE [LARGE SCALE GENOMIC DNA]</scope>
    <source>
        <strain>JJA</strain>
    </source>
</reference>
<sequence>MKRSMYAGRVREEHIGQEITLKGWVGRRRDLGGLIFIDLRDREGIMQLVINPEKVSAEVMATAESLRSEFVIEVTGQVAAREQANDKLPTGAVELNVTALIVLNTAKTTPFEIKDGIEANDDTRLRYRYLDLRRPEMLENLKLRAKVTHSIRNYLDELEFIDVETPFLSKSTPEGARDYLVPSRVNKGHFYALPQSPQITKQLLMNAGFDRYYQIVKCFRDEDLRGDRQPEFTQVDLETSFLTEQEIQDITEGLIARVMKETKGIEVTLPFPRMKYDDAMALYGSDKPDTRFDMLLQDLTEVVKGVDFKVFSEAPAVKAIVVKGAADNYSRKDIDKMTEVAKQYGAKGLAWVKVVDGELNGPVAKFLTGIQEELTTALALEDKDLVLFVADTLEVANATLGALRGRIAKELGLIDNDKFNFLWVVDWPMFEWSEEEGRYMSAHHPFTLPQEETAHELEGDLAKVRAIAYDIVLNGYELGGGSLRINQKDLQERMFKALGFSTEEANDQFGFLLEAMDYGFPPHGGLAIGLDRFVMLLAGEENIREVIAFPKNNKATDPMTQAPSTVALKQLEELSLQVEEDETNKTN</sequence>
<keyword id="KW-0030">Aminoacyl-tRNA synthetase</keyword>
<keyword id="KW-0067">ATP-binding</keyword>
<keyword id="KW-0963">Cytoplasm</keyword>
<keyword id="KW-0436">Ligase</keyword>
<keyword id="KW-0547">Nucleotide-binding</keyword>
<keyword id="KW-0648">Protein biosynthesis</keyword>
<gene>
    <name evidence="1" type="primary">aspS</name>
    <name type="ordered locus">SPJ_2136</name>
</gene>
<comment type="function">
    <text evidence="1">Catalyzes the attachment of L-aspartate to tRNA(Asp) in a two-step reaction: L-aspartate is first activated by ATP to form Asp-AMP and then transferred to the acceptor end of tRNA(Asp).</text>
</comment>
<comment type="catalytic activity">
    <reaction evidence="1">
        <text>tRNA(Asp) + L-aspartate + ATP = L-aspartyl-tRNA(Asp) + AMP + diphosphate</text>
        <dbReference type="Rhea" id="RHEA:19649"/>
        <dbReference type="Rhea" id="RHEA-COMP:9660"/>
        <dbReference type="Rhea" id="RHEA-COMP:9678"/>
        <dbReference type="ChEBI" id="CHEBI:29991"/>
        <dbReference type="ChEBI" id="CHEBI:30616"/>
        <dbReference type="ChEBI" id="CHEBI:33019"/>
        <dbReference type="ChEBI" id="CHEBI:78442"/>
        <dbReference type="ChEBI" id="CHEBI:78516"/>
        <dbReference type="ChEBI" id="CHEBI:456215"/>
        <dbReference type="EC" id="6.1.1.12"/>
    </reaction>
</comment>
<comment type="subunit">
    <text evidence="1">Homodimer.</text>
</comment>
<comment type="subcellular location">
    <subcellularLocation>
        <location evidence="1">Cytoplasm</location>
    </subcellularLocation>
</comment>
<comment type="similarity">
    <text evidence="1">Belongs to the class-II aminoacyl-tRNA synthetase family. Type 1 subfamily.</text>
</comment>